<protein>
    <recommendedName>
        <fullName evidence="1">Small ribosomal subunit protein uS13</fullName>
    </recommendedName>
    <alternativeName>
        <fullName evidence="3">30S ribosomal protein S13</fullName>
    </alternativeName>
</protein>
<accession>B6J5F4</accession>
<gene>
    <name evidence="1" type="primary">rpsM</name>
    <name type="ordered locus">CbuK_0455</name>
</gene>
<organism>
    <name type="scientific">Coxiella burnetii (strain CbuK_Q154)</name>
    <name type="common">Coxiella burnetii (strain Q154)</name>
    <dbReference type="NCBI Taxonomy" id="434924"/>
    <lineage>
        <taxon>Bacteria</taxon>
        <taxon>Pseudomonadati</taxon>
        <taxon>Pseudomonadota</taxon>
        <taxon>Gammaproteobacteria</taxon>
        <taxon>Legionellales</taxon>
        <taxon>Coxiellaceae</taxon>
        <taxon>Coxiella</taxon>
    </lineage>
</organism>
<comment type="function">
    <text evidence="1">Located at the top of the head of the 30S subunit, it contacts several helices of the 16S rRNA. In the 70S ribosome it contacts the 23S rRNA (bridge B1a) and protein L5 of the 50S subunit (bridge B1b), connecting the 2 subunits; these bridges are implicated in subunit movement. Contacts the tRNAs in the A and P-sites.</text>
</comment>
<comment type="subunit">
    <text evidence="1">Part of the 30S ribosomal subunit. Forms a loose heterodimer with protein S19. Forms two bridges to the 50S subunit in the 70S ribosome.</text>
</comment>
<comment type="similarity">
    <text evidence="1">Belongs to the universal ribosomal protein uS13 family.</text>
</comment>
<evidence type="ECO:0000255" key="1">
    <source>
        <dbReference type="HAMAP-Rule" id="MF_01315"/>
    </source>
</evidence>
<evidence type="ECO:0000256" key="2">
    <source>
        <dbReference type="SAM" id="MobiDB-lite"/>
    </source>
</evidence>
<evidence type="ECO:0000305" key="3"/>
<proteinExistence type="inferred from homology"/>
<dbReference type="EMBL" id="CP001020">
    <property type="protein sequence ID" value="ACJ19738.1"/>
    <property type="molecule type" value="Genomic_DNA"/>
</dbReference>
<dbReference type="RefSeq" id="WP_005771503.1">
    <property type="nucleotide sequence ID" value="NC_011528.1"/>
</dbReference>
<dbReference type="SMR" id="B6J5F4"/>
<dbReference type="KEGG" id="cbc:CbuK_0455"/>
<dbReference type="HOGENOM" id="CLU_103849_1_2_6"/>
<dbReference type="GO" id="GO:0005829">
    <property type="term" value="C:cytosol"/>
    <property type="evidence" value="ECO:0007669"/>
    <property type="project" value="TreeGrafter"/>
</dbReference>
<dbReference type="GO" id="GO:0015935">
    <property type="term" value="C:small ribosomal subunit"/>
    <property type="evidence" value="ECO:0007669"/>
    <property type="project" value="TreeGrafter"/>
</dbReference>
<dbReference type="GO" id="GO:0019843">
    <property type="term" value="F:rRNA binding"/>
    <property type="evidence" value="ECO:0007669"/>
    <property type="project" value="UniProtKB-UniRule"/>
</dbReference>
<dbReference type="GO" id="GO:0003735">
    <property type="term" value="F:structural constituent of ribosome"/>
    <property type="evidence" value="ECO:0007669"/>
    <property type="project" value="InterPro"/>
</dbReference>
<dbReference type="GO" id="GO:0000049">
    <property type="term" value="F:tRNA binding"/>
    <property type="evidence" value="ECO:0007669"/>
    <property type="project" value="UniProtKB-UniRule"/>
</dbReference>
<dbReference type="GO" id="GO:0006412">
    <property type="term" value="P:translation"/>
    <property type="evidence" value="ECO:0007669"/>
    <property type="project" value="UniProtKB-UniRule"/>
</dbReference>
<dbReference type="FunFam" id="1.10.8.50:FF:000001">
    <property type="entry name" value="30S ribosomal protein S13"/>
    <property type="match status" value="1"/>
</dbReference>
<dbReference type="Gene3D" id="1.10.8.50">
    <property type="match status" value="1"/>
</dbReference>
<dbReference type="Gene3D" id="4.10.910.10">
    <property type="entry name" value="30s ribosomal protein s13, domain 2"/>
    <property type="match status" value="1"/>
</dbReference>
<dbReference type="HAMAP" id="MF_01315">
    <property type="entry name" value="Ribosomal_uS13"/>
    <property type="match status" value="1"/>
</dbReference>
<dbReference type="InterPro" id="IPR027437">
    <property type="entry name" value="Rbsml_uS13_C"/>
</dbReference>
<dbReference type="InterPro" id="IPR001892">
    <property type="entry name" value="Ribosomal_uS13"/>
</dbReference>
<dbReference type="InterPro" id="IPR010979">
    <property type="entry name" value="Ribosomal_uS13-like_H2TH"/>
</dbReference>
<dbReference type="InterPro" id="IPR019980">
    <property type="entry name" value="Ribosomal_uS13_bac-type"/>
</dbReference>
<dbReference type="InterPro" id="IPR018269">
    <property type="entry name" value="Ribosomal_uS13_CS"/>
</dbReference>
<dbReference type="NCBIfam" id="TIGR03631">
    <property type="entry name" value="uS13_bact"/>
    <property type="match status" value="1"/>
</dbReference>
<dbReference type="PANTHER" id="PTHR10871">
    <property type="entry name" value="30S RIBOSOMAL PROTEIN S13/40S RIBOSOMAL PROTEIN S18"/>
    <property type="match status" value="1"/>
</dbReference>
<dbReference type="PANTHER" id="PTHR10871:SF1">
    <property type="entry name" value="SMALL RIBOSOMAL SUBUNIT PROTEIN US13M"/>
    <property type="match status" value="1"/>
</dbReference>
<dbReference type="Pfam" id="PF00416">
    <property type="entry name" value="Ribosomal_S13"/>
    <property type="match status" value="1"/>
</dbReference>
<dbReference type="PIRSF" id="PIRSF002134">
    <property type="entry name" value="Ribosomal_S13"/>
    <property type="match status" value="1"/>
</dbReference>
<dbReference type="SUPFAM" id="SSF46946">
    <property type="entry name" value="S13-like H2TH domain"/>
    <property type="match status" value="1"/>
</dbReference>
<dbReference type="PROSITE" id="PS00646">
    <property type="entry name" value="RIBOSOMAL_S13_1"/>
    <property type="match status" value="1"/>
</dbReference>
<dbReference type="PROSITE" id="PS50159">
    <property type="entry name" value="RIBOSOMAL_S13_2"/>
    <property type="match status" value="1"/>
</dbReference>
<keyword id="KW-0687">Ribonucleoprotein</keyword>
<keyword id="KW-0689">Ribosomal protein</keyword>
<keyword id="KW-0694">RNA-binding</keyword>
<keyword id="KW-0699">rRNA-binding</keyword>
<keyword id="KW-0820">tRNA-binding</keyword>
<sequence length="119" mass="13420">MAARIAGVNIPVQKHARIALQAIYGIGNSRALEICKEAKIDPATKVKDLSEAELDALRTEVGKFSVEGDLRRERSMDIKRKMDLGTYEGIRHRRGLPLRGQRTRSNARTRKGKRKPIRS</sequence>
<reference key="1">
    <citation type="journal article" date="2009" name="Infect. Immun.">
        <title>Comparative genomics reveal extensive transposon-mediated genomic plasticity and diversity among potential effector proteins within the genus Coxiella.</title>
        <authorList>
            <person name="Beare P.A."/>
            <person name="Unsworth N."/>
            <person name="Andoh M."/>
            <person name="Voth D.E."/>
            <person name="Omsland A."/>
            <person name="Gilk S.D."/>
            <person name="Williams K.P."/>
            <person name="Sobral B.W."/>
            <person name="Kupko J.J. III"/>
            <person name="Porcella S.F."/>
            <person name="Samuel J.E."/>
            <person name="Heinzen R.A."/>
        </authorList>
    </citation>
    <scope>NUCLEOTIDE SEQUENCE [LARGE SCALE GENOMIC DNA]</scope>
    <source>
        <strain>CbuK_Q154</strain>
    </source>
</reference>
<name>RS13_COXB1</name>
<feature type="chain" id="PRO_1000141248" description="Small ribosomal subunit protein uS13">
    <location>
        <begin position="1"/>
        <end position="119"/>
    </location>
</feature>
<feature type="region of interest" description="Disordered" evidence="2">
    <location>
        <begin position="90"/>
        <end position="119"/>
    </location>
</feature>
<feature type="compositionally biased region" description="Basic residues" evidence="2">
    <location>
        <begin position="91"/>
        <end position="119"/>
    </location>
</feature>